<name>PSBM_AGRST</name>
<sequence>MEVNILAFIATALFILIPTAFLLIIYVKTASQND</sequence>
<reference key="1">
    <citation type="journal article" date="2007" name="Theor. Appl. Genet.">
        <title>Complete chloroplast genome sequences of Hordeum vulgare, Sorghum bicolor and Agrostis stolonifera, and comparative analyses with other grass genomes.</title>
        <authorList>
            <person name="Saski C."/>
            <person name="Lee S.-B."/>
            <person name="Fjellheim S."/>
            <person name="Guda C."/>
            <person name="Jansen R.K."/>
            <person name="Luo H."/>
            <person name="Tomkins J."/>
            <person name="Rognli O.A."/>
            <person name="Daniell H."/>
            <person name="Clarke J.L."/>
        </authorList>
    </citation>
    <scope>NUCLEOTIDE SEQUENCE [LARGE SCALE GENOMIC DNA]</scope>
    <source>
        <strain>cv. Penn A-4</strain>
    </source>
</reference>
<evidence type="ECO:0000255" key="1">
    <source>
        <dbReference type="HAMAP-Rule" id="MF_00438"/>
    </source>
</evidence>
<comment type="function">
    <text evidence="1">One of the components of the core complex of photosystem II (PSII). PSII is a light-driven water:plastoquinone oxidoreductase that uses light energy to abstract electrons from H(2)O, generating O(2) and a proton gradient subsequently used for ATP formation. It consists of a core antenna complex that captures photons, and an electron transfer chain that converts photonic excitation into a charge separation. This subunit is found at the monomer-monomer interface.</text>
</comment>
<comment type="subunit">
    <text evidence="1">PSII is composed of 1 copy each of membrane proteins PsbA, PsbB, PsbC, PsbD, PsbE, PsbF, PsbH, PsbI, PsbJ, PsbK, PsbL, PsbM, PsbT, PsbX, PsbY, PsbZ, Psb30/Ycf12, at least 3 peripheral proteins of the oxygen-evolving complex and a large number of cofactors. It forms dimeric complexes.</text>
</comment>
<comment type="subcellular location">
    <subcellularLocation>
        <location evidence="1">Plastid</location>
        <location evidence="1">Chloroplast thylakoid membrane</location>
        <topology evidence="1">Single-pass membrane protein</topology>
    </subcellularLocation>
</comment>
<comment type="similarity">
    <text evidence="1">Belongs to the PsbM family.</text>
</comment>
<proteinExistence type="inferred from homology"/>
<feature type="chain" id="PRO_0000276231" description="Photosystem II reaction center protein M">
    <location>
        <begin position="1"/>
        <end position="34"/>
    </location>
</feature>
<feature type="transmembrane region" description="Helical" evidence="1">
    <location>
        <begin position="5"/>
        <end position="25"/>
    </location>
</feature>
<accession>A1E9Z6</accession>
<geneLocation type="chloroplast"/>
<gene>
    <name evidence="1" type="primary">psbM</name>
</gene>
<organism>
    <name type="scientific">Agrostis stolonifera</name>
    <name type="common">Creeping bentgrass</name>
    <dbReference type="NCBI Taxonomy" id="63632"/>
    <lineage>
        <taxon>Eukaryota</taxon>
        <taxon>Viridiplantae</taxon>
        <taxon>Streptophyta</taxon>
        <taxon>Embryophyta</taxon>
        <taxon>Tracheophyta</taxon>
        <taxon>Spermatophyta</taxon>
        <taxon>Magnoliopsida</taxon>
        <taxon>Liliopsida</taxon>
        <taxon>Poales</taxon>
        <taxon>Poaceae</taxon>
        <taxon>BOP clade</taxon>
        <taxon>Pooideae</taxon>
        <taxon>Poodae</taxon>
        <taxon>Poeae</taxon>
        <taxon>Poeae Chloroplast Group 1 (Aveneae type)</taxon>
        <taxon>Agrostidodinae</taxon>
        <taxon>Agrostidinae</taxon>
        <taxon>Agrostis</taxon>
    </lineage>
</organism>
<dbReference type="EMBL" id="EF115543">
    <property type="protein sequence ID" value="ABK79568.1"/>
    <property type="molecule type" value="Genomic_DNA"/>
</dbReference>
<dbReference type="RefSeq" id="YP_874724.1">
    <property type="nucleotide sequence ID" value="NC_008591.1"/>
</dbReference>
<dbReference type="SMR" id="A1E9Z6"/>
<dbReference type="GeneID" id="4524941"/>
<dbReference type="GO" id="GO:0009535">
    <property type="term" value="C:chloroplast thylakoid membrane"/>
    <property type="evidence" value="ECO:0007669"/>
    <property type="project" value="UniProtKB-SubCell"/>
</dbReference>
<dbReference type="GO" id="GO:0009523">
    <property type="term" value="C:photosystem II"/>
    <property type="evidence" value="ECO:0007669"/>
    <property type="project" value="UniProtKB-KW"/>
</dbReference>
<dbReference type="GO" id="GO:0019684">
    <property type="term" value="P:photosynthesis, light reaction"/>
    <property type="evidence" value="ECO:0007669"/>
    <property type="project" value="InterPro"/>
</dbReference>
<dbReference type="HAMAP" id="MF_00438">
    <property type="entry name" value="PSII_PsbM"/>
    <property type="match status" value="1"/>
</dbReference>
<dbReference type="InterPro" id="IPR007826">
    <property type="entry name" value="PSII_PsbM"/>
</dbReference>
<dbReference type="InterPro" id="IPR037269">
    <property type="entry name" value="PSII_PsbM_sf"/>
</dbReference>
<dbReference type="NCBIfam" id="TIGR03038">
    <property type="entry name" value="PS_II_psbM"/>
    <property type="match status" value="1"/>
</dbReference>
<dbReference type="PANTHER" id="PTHR35774">
    <property type="entry name" value="PHOTOSYSTEM II REACTION CENTER PROTEIN M"/>
    <property type="match status" value="1"/>
</dbReference>
<dbReference type="PANTHER" id="PTHR35774:SF1">
    <property type="entry name" value="PHOTOSYSTEM II REACTION CENTER PROTEIN M"/>
    <property type="match status" value="1"/>
</dbReference>
<dbReference type="Pfam" id="PF05151">
    <property type="entry name" value="PsbM"/>
    <property type="match status" value="1"/>
</dbReference>
<dbReference type="SUPFAM" id="SSF161033">
    <property type="entry name" value="Photosystem II reaction center protein M, PsbM"/>
    <property type="match status" value="1"/>
</dbReference>
<keyword id="KW-0150">Chloroplast</keyword>
<keyword id="KW-0472">Membrane</keyword>
<keyword id="KW-0602">Photosynthesis</keyword>
<keyword id="KW-0604">Photosystem II</keyword>
<keyword id="KW-0934">Plastid</keyword>
<keyword id="KW-0674">Reaction center</keyword>
<keyword id="KW-0793">Thylakoid</keyword>
<keyword id="KW-0812">Transmembrane</keyword>
<keyword id="KW-1133">Transmembrane helix</keyword>
<protein>
    <recommendedName>
        <fullName evidence="1">Photosystem II reaction center protein M</fullName>
        <shortName evidence="1">PSII-M</shortName>
    </recommendedName>
</protein>